<keyword id="KW-0221">Differentiation</keyword>
<keyword id="KW-0238">DNA-binding</keyword>
<keyword id="KW-0371">Homeobox</keyword>
<keyword id="KW-1017">Isopeptide bond</keyword>
<keyword id="KW-0479">Metal-binding</keyword>
<keyword id="KW-0524">Neurogenesis</keyword>
<keyword id="KW-0539">Nucleus</keyword>
<keyword id="KW-0597">Phosphoprotein</keyword>
<keyword id="KW-1185">Reference proteome</keyword>
<keyword id="KW-0677">Repeat</keyword>
<keyword id="KW-0678">Repressor</keyword>
<keyword id="KW-0804">Transcription</keyword>
<keyword id="KW-0805">Transcription regulation</keyword>
<keyword id="KW-0832">Ubl conjugation</keyword>
<keyword id="KW-0862">Zinc</keyword>
<keyword id="KW-0863">Zinc-finger</keyword>
<dbReference type="EMBL" id="CR860166">
    <property type="protein sequence ID" value="CAH92308.1"/>
    <property type="molecule type" value="mRNA"/>
</dbReference>
<dbReference type="RefSeq" id="NP_001126352.1">
    <property type="nucleotide sequence ID" value="NM_001132880.1"/>
</dbReference>
<dbReference type="SMR" id="Q5R7F2"/>
<dbReference type="FunCoup" id="Q5R7F2">
    <property type="interactions" value="1927"/>
</dbReference>
<dbReference type="GeneID" id="100173333"/>
<dbReference type="KEGG" id="pon:100173333"/>
<dbReference type="CTD" id="22882"/>
<dbReference type="InParanoid" id="Q5R7F2"/>
<dbReference type="OrthoDB" id="6159439at2759"/>
<dbReference type="Proteomes" id="UP000001595">
    <property type="component" value="Unplaced"/>
</dbReference>
<dbReference type="GO" id="GO:0005634">
    <property type="term" value="C:nucleus"/>
    <property type="evidence" value="ECO:0000250"/>
    <property type="project" value="UniProtKB"/>
</dbReference>
<dbReference type="GO" id="GO:0003677">
    <property type="term" value="F:DNA binding"/>
    <property type="evidence" value="ECO:0007669"/>
    <property type="project" value="UniProtKB-KW"/>
</dbReference>
<dbReference type="GO" id="GO:0000981">
    <property type="term" value="F:DNA-binding transcription factor activity, RNA polymerase II-specific"/>
    <property type="evidence" value="ECO:0007669"/>
    <property type="project" value="TreeGrafter"/>
</dbReference>
<dbReference type="GO" id="GO:0046982">
    <property type="term" value="F:protein heterodimerization activity"/>
    <property type="evidence" value="ECO:0000250"/>
    <property type="project" value="UniProtKB"/>
</dbReference>
<dbReference type="GO" id="GO:0042803">
    <property type="term" value="F:protein homodimerization activity"/>
    <property type="evidence" value="ECO:0000250"/>
    <property type="project" value="UniProtKB"/>
</dbReference>
<dbReference type="GO" id="GO:0008270">
    <property type="term" value="F:zinc ion binding"/>
    <property type="evidence" value="ECO:0007669"/>
    <property type="project" value="UniProtKB-KW"/>
</dbReference>
<dbReference type="GO" id="GO:0030154">
    <property type="term" value="P:cell differentiation"/>
    <property type="evidence" value="ECO:0007669"/>
    <property type="project" value="UniProtKB-KW"/>
</dbReference>
<dbReference type="GO" id="GO:0000122">
    <property type="term" value="P:negative regulation of transcription by RNA polymerase II"/>
    <property type="evidence" value="ECO:0000250"/>
    <property type="project" value="UniProtKB"/>
</dbReference>
<dbReference type="GO" id="GO:0007399">
    <property type="term" value="P:nervous system development"/>
    <property type="evidence" value="ECO:0007669"/>
    <property type="project" value="UniProtKB-KW"/>
</dbReference>
<dbReference type="CDD" id="cd00086">
    <property type="entry name" value="homeodomain"/>
    <property type="match status" value="4"/>
</dbReference>
<dbReference type="FunFam" id="3.30.160.60:FF:000296">
    <property type="entry name" value="Zinc fingers and homeoboxes protein 1"/>
    <property type="match status" value="1"/>
</dbReference>
<dbReference type="FunFam" id="1.10.10.60:FF:000247">
    <property type="entry name" value="Zinc fingers and homeoboxes protein 2"/>
    <property type="match status" value="1"/>
</dbReference>
<dbReference type="FunFam" id="1.10.10.60:FF:000264">
    <property type="entry name" value="zinc fingers and homeoboxes protein 2"/>
    <property type="match status" value="1"/>
</dbReference>
<dbReference type="FunFam" id="1.10.10.60:FF:000272">
    <property type="entry name" value="zinc fingers and homeoboxes protein 2"/>
    <property type="match status" value="1"/>
</dbReference>
<dbReference type="FunFam" id="1.10.10.60:FF:000062">
    <property type="entry name" value="zinc fingers and homeoboxes protein 3"/>
    <property type="match status" value="1"/>
</dbReference>
<dbReference type="Gene3D" id="3.30.160.60">
    <property type="entry name" value="Classic Zinc Finger"/>
    <property type="match status" value="1"/>
</dbReference>
<dbReference type="Gene3D" id="1.10.10.60">
    <property type="entry name" value="Homeodomain-like"/>
    <property type="match status" value="4"/>
</dbReference>
<dbReference type="InterPro" id="IPR001356">
    <property type="entry name" value="HD"/>
</dbReference>
<dbReference type="InterPro" id="IPR009057">
    <property type="entry name" value="Homeodomain-like_sf"/>
</dbReference>
<dbReference type="InterPro" id="IPR041057">
    <property type="entry name" value="ZHX_Znf_C2H2"/>
</dbReference>
<dbReference type="InterPro" id="IPR036236">
    <property type="entry name" value="Znf_C2H2_sf"/>
</dbReference>
<dbReference type="InterPro" id="IPR013087">
    <property type="entry name" value="Znf_C2H2_type"/>
</dbReference>
<dbReference type="PANTHER" id="PTHR15467:SF5">
    <property type="entry name" value="ZINC FINGERS AND HOMEOBOXES PROTEIN 2"/>
    <property type="match status" value="1"/>
</dbReference>
<dbReference type="PANTHER" id="PTHR15467">
    <property type="entry name" value="ZINC-FINGERS AND HOMEOBOXES RELATED"/>
    <property type="match status" value="1"/>
</dbReference>
<dbReference type="Pfam" id="PF00046">
    <property type="entry name" value="Homeodomain"/>
    <property type="match status" value="3"/>
</dbReference>
<dbReference type="Pfam" id="PF18387">
    <property type="entry name" value="zf_C2H2_ZHX"/>
    <property type="match status" value="1"/>
</dbReference>
<dbReference type="SMART" id="SM00389">
    <property type="entry name" value="HOX"/>
    <property type="match status" value="4"/>
</dbReference>
<dbReference type="SMART" id="SM00355">
    <property type="entry name" value="ZnF_C2H2"/>
    <property type="match status" value="2"/>
</dbReference>
<dbReference type="SUPFAM" id="SSF57667">
    <property type="entry name" value="beta-beta-alpha zinc fingers"/>
    <property type="match status" value="2"/>
</dbReference>
<dbReference type="SUPFAM" id="SSF46689">
    <property type="entry name" value="Homeodomain-like"/>
    <property type="match status" value="4"/>
</dbReference>
<dbReference type="PROSITE" id="PS50071">
    <property type="entry name" value="HOMEOBOX_2"/>
    <property type="match status" value="3"/>
</dbReference>
<dbReference type="PROSITE" id="PS50157">
    <property type="entry name" value="ZINC_FINGER_C2H2_2"/>
    <property type="match status" value="1"/>
</dbReference>
<proteinExistence type="evidence at transcript level"/>
<accession>Q5R7F2</accession>
<gene>
    <name type="primary">ZHX2</name>
</gene>
<feature type="chain" id="PRO_0000049393" description="Zinc fingers and homeoboxes protein 2">
    <location>
        <begin position="1"/>
        <end position="837"/>
    </location>
</feature>
<feature type="zinc finger region" description="C2H2-type 1" evidence="3">
    <location>
        <begin position="78"/>
        <end position="101"/>
    </location>
</feature>
<feature type="zinc finger region" description="C2H2-type 2" evidence="3">
    <location>
        <begin position="110"/>
        <end position="133"/>
    </location>
</feature>
<feature type="DNA-binding region" description="Homeobox 1" evidence="4">
    <location>
        <begin position="263"/>
        <end position="324"/>
    </location>
</feature>
<feature type="DNA-binding region" description="Homeobox 2" evidence="4">
    <location>
        <begin position="439"/>
        <end position="501"/>
    </location>
</feature>
<feature type="DNA-binding region" description="Homeobox 3" evidence="4">
    <location>
        <begin position="530"/>
        <end position="591"/>
    </location>
</feature>
<feature type="DNA-binding region" description="Homeobox 4" evidence="4">
    <location>
        <begin position="628"/>
        <end position="690"/>
    </location>
</feature>
<feature type="region of interest" description="Disordered" evidence="5">
    <location>
        <begin position="1"/>
        <end position="41"/>
    </location>
</feature>
<feature type="region of interest" description="Interaction with EFNB1" evidence="1">
    <location>
        <begin position="27"/>
        <end position="77"/>
    </location>
</feature>
<feature type="region of interest" description="Disordered" evidence="5">
    <location>
        <begin position="167"/>
        <end position="203"/>
    </location>
</feature>
<feature type="region of interest" description="Required for homodimerization" evidence="2">
    <location>
        <begin position="195"/>
        <end position="358"/>
    </location>
</feature>
<feature type="region of interest" description="Required for interaction with NFYA" evidence="2">
    <location>
        <begin position="263"/>
        <end position="497"/>
    </location>
</feature>
<feature type="region of interest" description="Required for repressor activity" evidence="2">
    <location>
        <begin position="263"/>
        <end position="446"/>
    </location>
</feature>
<feature type="region of interest" description="Required for nuclear localization" evidence="2">
    <location>
        <begin position="317"/>
        <end position="446"/>
    </location>
</feature>
<feature type="region of interest" description="Disordered" evidence="5">
    <location>
        <begin position="404"/>
        <end position="445"/>
    </location>
</feature>
<feature type="region of interest" description="Disordered" evidence="5">
    <location>
        <begin position="754"/>
        <end position="837"/>
    </location>
</feature>
<feature type="compositionally biased region" description="Low complexity" evidence="5">
    <location>
        <begin position="167"/>
        <end position="180"/>
    </location>
</feature>
<feature type="compositionally biased region" description="Basic and acidic residues" evidence="5">
    <location>
        <begin position="192"/>
        <end position="203"/>
    </location>
</feature>
<feature type="compositionally biased region" description="Pro residues" evidence="5">
    <location>
        <begin position="427"/>
        <end position="439"/>
    </location>
</feature>
<feature type="modified residue" description="Phosphothreonine" evidence="2">
    <location>
        <position position="37"/>
    </location>
</feature>
<feature type="modified residue" description="Phosphoserine" evidence="1">
    <location>
        <position position="825"/>
    </location>
</feature>
<feature type="modified residue" description="Phosphoserine" evidence="1">
    <location>
        <position position="827"/>
    </location>
</feature>
<feature type="cross-link" description="Glycyl lysine isopeptide (Lys-Gly) (interchain with G-Cter in SUMO2)" evidence="2">
    <location>
        <position position="64"/>
    </location>
</feature>
<feature type="cross-link" description="Glycyl lysine isopeptide (Lys-Gly) (interchain with G-Cter in SUMO2)" evidence="2">
    <location>
        <position position="455"/>
    </location>
</feature>
<protein>
    <recommendedName>
        <fullName>Zinc fingers and homeoboxes protein 2</fullName>
    </recommendedName>
    <alternativeName>
        <fullName>Zinc finger and homeodomain protein 2</fullName>
    </alternativeName>
</protein>
<evidence type="ECO:0000250" key="1">
    <source>
        <dbReference type="UniProtKB" id="Q8C0C0"/>
    </source>
</evidence>
<evidence type="ECO:0000250" key="2">
    <source>
        <dbReference type="UniProtKB" id="Q9Y6X8"/>
    </source>
</evidence>
<evidence type="ECO:0000255" key="3">
    <source>
        <dbReference type="PROSITE-ProRule" id="PRU00042"/>
    </source>
</evidence>
<evidence type="ECO:0000255" key="4">
    <source>
        <dbReference type="PROSITE-ProRule" id="PRU00108"/>
    </source>
</evidence>
<evidence type="ECO:0000256" key="5">
    <source>
        <dbReference type="SAM" id="MobiDB-lite"/>
    </source>
</evidence>
<evidence type="ECO:0000305" key="6"/>
<reference key="1">
    <citation type="submission" date="2004-11" db="EMBL/GenBank/DDBJ databases">
        <authorList>
            <consortium name="The German cDNA consortium"/>
        </authorList>
    </citation>
    <scope>NUCLEOTIDE SEQUENCE [LARGE SCALE MRNA]</scope>
    <source>
        <tissue>Brain cortex</tissue>
    </source>
</reference>
<organism>
    <name type="scientific">Pongo abelii</name>
    <name type="common">Sumatran orangutan</name>
    <name type="synonym">Pongo pygmaeus abelii</name>
    <dbReference type="NCBI Taxonomy" id="9601"/>
    <lineage>
        <taxon>Eukaryota</taxon>
        <taxon>Metazoa</taxon>
        <taxon>Chordata</taxon>
        <taxon>Craniata</taxon>
        <taxon>Vertebrata</taxon>
        <taxon>Euteleostomi</taxon>
        <taxon>Mammalia</taxon>
        <taxon>Eutheria</taxon>
        <taxon>Euarchontoglires</taxon>
        <taxon>Primates</taxon>
        <taxon>Haplorrhini</taxon>
        <taxon>Catarrhini</taxon>
        <taxon>Hominidae</taxon>
        <taxon>Pongo</taxon>
    </lineage>
</organism>
<sequence length="837" mass="92154">MASKRKSTTPCMVRTSQVVEQDVPEEVDRAKEKGIGTPQPDVAKDCWAAELENSSKENEVIEVKSMGESQSKKLQGGYECKYCPYSTQNLNEFTEHVDMQHPNVILNPLYVCAECNFTTKKYDSLSDHNSKFHPGEANFKLKLIKRNNQTVLEQSIEATNHVVSITTSGPGTGDSDSGISVSKTPIMKPGKPKADAKKVPKKPEEIAPENHVEGTARLVTDTAEILSRLGGVELLQDTLGHVMPSVQLPPNINLVPKVPVPLNTTKYNSALDTNATMINSFNKFPYPTQAELSWLTAASKHPEEHIRIWFATQRLKHGISWSPEEVEEARKKMFNGTIQSVPPTITVLPAQLAPTKVTQPILQTALPCQILGQTSLVLTPVTSGSTTVSCSPITLAVAGVTNHGQKRPLVTPQAAPEPKRPHIAQVPEPPPKVANPPLTPASDRKKTKEQIAHLKASFLQSQFPDDAEVYRLIEVTGLARSEIKKWFSDHRYRCQRGIVHITSGSLAKEQLAIAASRHGRTYHAYPDFAPQKFKEKTQGQVKILEDSFLKSSFPTQAELDRLRVETKLSRREIDSWFSERRKLRDSMEQAVLDSMGSGKKGQDVGAPNGALSRLDQLSGAQLTSSLPSPSPAIAKSQEQVHLLRSTFARTQWPTPQEYDQLAAKTGLVRTEIVRWFKENRCLLKTGTVKWMEQYQHQPVADDHGYDAVARKATKPMAESPKNGGDMVPQYYKDPKKLCEEDLEKLVPRVKVGSEPAKDCLPAKPSEATSDRSEGSSRDGQGSDENEESSVVDYVEVTVGEEDAISDRSDSWSQAAAEGVAELAESDSDCVPAEAGQA</sequence>
<name>ZHX2_PONAB</name>
<comment type="function">
    <text evidence="1 2">Acts as a transcriptional repressor. Represses the promoter activity of the CDC25C gene stimulated by NFYA. May play a role in retinal development where it regulates the composition of bipolar cell populations, by promoting differentiation of bipolar OFF-type cells. In the brain, may promote maintenance and suppress differentiation of neural progenitor cells in the developing cortex.</text>
</comment>
<comment type="subunit">
    <text evidence="1 2">Homodimer (via homeobox domain 1). Heterodimer with ZHX1 (via homeobox domain 1). Heterodimer with ZHX3 (via homeobox domain 1). Heterodimerization with ZHX1 is not necessary for repressor activity. Interacts (via homeobox domain) with NFYA (via N-terminus). Interacts with EFNB1 intracellular domain peptide; the interaction enhances ZHX2 transcriptional repression activity.</text>
</comment>
<comment type="subcellular location">
    <subcellularLocation>
        <location evidence="4">Nucleus</location>
    </subcellularLocation>
    <text evidence="1">Colocalizes with EFNB1 intracellular domain in the nucleus.</text>
</comment>
<comment type="similarity">
    <text evidence="6">Belongs to the ZHX family.</text>
</comment>